<protein>
    <recommendedName>
        <fullName evidence="1">ATP-dependent Clp protease proteolytic subunit</fullName>
        <ecNumber evidence="1">3.4.21.92</ecNumber>
    </recommendedName>
    <alternativeName>
        <fullName evidence="1">Endopeptidase Clp</fullName>
    </alternativeName>
</protein>
<gene>
    <name evidence="1" type="primary">clpP</name>
    <name type="ordered locus">Spy49_0323</name>
</gene>
<name>CLPP_STRPZ</name>
<sequence length="196" mass="21649">MIPVVIEQTSRGERSYDIYSRLLKDRIIMLTGPVEDNMANSVIAQLLFLDAQDNTKDIYLYVNTPGGSVSAGLAIVDTMNFIKADVQTIVMGMAASMGTVIASSGTKGKRFMLPNAEYMIHQPMGGTGGGTQQTDMAIAAEHLLKTRHRLEKILAQNAGKTIKQIHKDAERDYWMSAEETLAYGFIDEIMENNELK</sequence>
<proteinExistence type="inferred from homology"/>
<evidence type="ECO:0000255" key="1">
    <source>
        <dbReference type="HAMAP-Rule" id="MF_00444"/>
    </source>
</evidence>
<feature type="chain" id="PRO_1000124717" description="ATP-dependent Clp protease proteolytic subunit">
    <location>
        <begin position="1"/>
        <end position="196"/>
    </location>
</feature>
<feature type="active site" description="Nucleophile" evidence="1">
    <location>
        <position position="96"/>
    </location>
</feature>
<feature type="active site" evidence="1">
    <location>
        <position position="121"/>
    </location>
</feature>
<dbReference type="EC" id="3.4.21.92" evidence="1"/>
<dbReference type="EMBL" id="CP000829">
    <property type="protein sequence ID" value="ACI60660.1"/>
    <property type="molecule type" value="Genomic_DNA"/>
</dbReference>
<dbReference type="SMR" id="B5XJZ8"/>
<dbReference type="MEROPS" id="S14.001"/>
<dbReference type="KEGG" id="soz:Spy49_0323"/>
<dbReference type="HOGENOM" id="CLU_058707_3_2_9"/>
<dbReference type="Proteomes" id="UP000001039">
    <property type="component" value="Chromosome"/>
</dbReference>
<dbReference type="GO" id="GO:0005737">
    <property type="term" value="C:cytoplasm"/>
    <property type="evidence" value="ECO:0007669"/>
    <property type="project" value="UniProtKB-SubCell"/>
</dbReference>
<dbReference type="GO" id="GO:0009368">
    <property type="term" value="C:endopeptidase Clp complex"/>
    <property type="evidence" value="ECO:0007669"/>
    <property type="project" value="TreeGrafter"/>
</dbReference>
<dbReference type="GO" id="GO:0004176">
    <property type="term" value="F:ATP-dependent peptidase activity"/>
    <property type="evidence" value="ECO:0007669"/>
    <property type="project" value="InterPro"/>
</dbReference>
<dbReference type="GO" id="GO:0051117">
    <property type="term" value="F:ATPase binding"/>
    <property type="evidence" value="ECO:0007669"/>
    <property type="project" value="TreeGrafter"/>
</dbReference>
<dbReference type="GO" id="GO:0004252">
    <property type="term" value="F:serine-type endopeptidase activity"/>
    <property type="evidence" value="ECO:0007669"/>
    <property type="project" value="UniProtKB-UniRule"/>
</dbReference>
<dbReference type="GO" id="GO:0006515">
    <property type="term" value="P:protein quality control for misfolded or incompletely synthesized proteins"/>
    <property type="evidence" value="ECO:0007669"/>
    <property type="project" value="TreeGrafter"/>
</dbReference>
<dbReference type="CDD" id="cd07017">
    <property type="entry name" value="S14_ClpP_2"/>
    <property type="match status" value="1"/>
</dbReference>
<dbReference type="FunFam" id="3.90.226.10:FF:000014">
    <property type="entry name" value="ATP-dependent Clp protease proteolytic subunit"/>
    <property type="match status" value="1"/>
</dbReference>
<dbReference type="Gene3D" id="3.90.226.10">
    <property type="entry name" value="2-enoyl-CoA Hydratase, Chain A, domain 1"/>
    <property type="match status" value="1"/>
</dbReference>
<dbReference type="HAMAP" id="MF_00444">
    <property type="entry name" value="ClpP"/>
    <property type="match status" value="1"/>
</dbReference>
<dbReference type="InterPro" id="IPR001907">
    <property type="entry name" value="ClpP"/>
</dbReference>
<dbReference type="InterPro" id="IPR029045">
    <property type="entry name" value="ClpP/crotonase-like_dom_sf"/>
</dbReference>
<dbReference type="InterPro" id="IPR023562">
    <property type="entry name" value="ClpP/TepA"/>
</dbReference>
<dbReference type="InterPro" id="IPR033135">
    <property type="entry name" value="ClpP_His_AS"/>
</dbReference>
<dbReference type="InterPro" id="IPR018215">
    <property type="entry name" value="ClpP_Ser_AS"/>
</dbReference>
<dbReference type="NCBIfam" id="NF001368">
    <property type="entry name" value="PRK00277.1"/>
    <property type="match status" value="1"/>
</dbReference>
<dbReference type="NCBIfam" id="NF009205">
    <property type="entry name" value="PRK12553.1"/>
    <property type="match status" value="1"/>
</dbReference>
<dbReference type="PANTHER" id="PTHR10381">
    <property type="entry name" value="ATP-DEPENDENT CLP PROTEASE PROTEOLYTIC SUBUNIT"/>
    <property type="match status" value="1"/>
</dbReference>
<dbReference type="PANTHER" id="PTHR10381:SF70">
    <property type="entry name" value="ATP-DEPENDENT CLP PROTEASE PROTEOLYTIC SUBUNIT"/>
    <property type="match status" value="1"/>
</dbReference>
<dbReference type="Pfam" id="PF00574">
    <property type="entry name" value="CLP_protease"/>
    <property type="match status" value="1"/>
</dbReference>
<dbReference type="PRINTS" id="PR00127">
    <property type="entry name" value="CLPPROTEASEP"/>
</dbReference>
<dbReference type="SUPFAM" id="SSF52096">
    <property type="entry name" value="ClpP/crotonase"/>
    <property type="match status" value="1"/>
</dbReference>
<dbReference type="PROSITE" id="PS00382">
    <property type="entry name" value="CLP_PROTEASE_HIS"/>
    <property type="match status" value="1"/>
</dbReference>
<dbReference type="PROSITE" id="PS00381">
    <property type="entry name" value="CLP_PROTEASE_SER"/>
    <property type="match status" value="1"/>
</dbReference>
<comment type="function">
    <text evidence="1">Cleaves peptides in various proteins in a process that requires ATP hydrolysis. Has a chymotrypsin-like activity. Plays a major role in the degradation of misfolded proteins.</text>
</comment>
<comment type="catalytic activity">
    <reaction evidence="1">
        <text>Hydrolysis of proteins to small peptides in the presence of ATP and magnesium. alpha-casein is the usual test substrate. In the absence of ATP, only oligopeptides shorter than five residues are hydrolyzed (such as succinyl-Leu-Tyr-|-NHMec, and Leu-Tyr-Leu-|-Tyr-Trp, in which cleavage of the -Tyr-|-Leu- and -Tyr-|-Trp bonds also occurs).</text>
        <dbReference type="EC" id="3.4.21.92"/>
    </reaction>
</comment>
<comment type="subunit">
    <text evidence="1">Fourteen ClpP subunits assemble into 2 heptameric rings which stack back to back to give a disk-like structure with a central cavity, resembling the structure of eukaryotic proteasomes.</text>
</comment>
<comment type="subcellular location">
    <subcellularLocation>
        <location evidence="1">Cytoplasm</location>
    </subcellularLocation>
</comment>
<comment type="similarity">
    <text evidence="1">Belongs to the peptidase S14 family.</text>
</comment>
<accession>B5XJZ8</accession>
<keyword id="KW-0963">Cytoplasm</keyword>
<keyword id="KW-0378">Hydrolase</keyword>
<keyword id="KW-0645">Protease</keyword>
<keyword id="KW-0720">Serine protease</keyword>
<organism>
    <name type="scientific">Streptococcus pyogenes serotype M49 (strain NZ131)</name>
    <dbReference type="NCBI Taxonomy" id="471876"/>
    <lineage>
        <taxon>Bacteria</taxon>
        <taxon>Bacillati</taxon>
        <taxon>Bacillota</taxon>
        <taxon>Bacilli</taxon>
        <taxon>Lactobacillales</taxon>
        <taxon>Streptococcaceae</taxon>
        <taxon>Streptococcus</taxon>
    </lineage>
</organism>
<reference key="1">
    <citation type="journal article" date="2008" name="J. Bacteriol.">
        <title>Genome sequence of a nephritogenic and highly transformable M49 strain of Streptococcus pyogenes.</title>
        <authorList>
            <person name="McShan W.M."/>
            <person name="Ferretti J.J."/>
            <person name="Karasawa T."/>
            <person name="Suvorov A.N."/>
            <person name="Lin S."/>
            <person name="Qin B."/>
            <person name="Jia H."/>
            <person name="Kenton S."/>
            <person name="Najar F."/>
            <person name="Wu H."/>
            <person name="Scott J."/>
            <person name="Roe B.A."/>
            <person name="Savic D.J."/>
        </authorList>
    </citation>
    <scope>NUCLEOTIDE SEQUENCE [LARGE SCALE GENOMIC DNA]</scope>
    <source>
        <strain>NZ131</strain>
    </source>
</reference>